<accession>Q23623</accession>
<sequence length="400" mass="45186">MRYDVLARAGFARRGNLHLPHSIVETPVFMPVGTQGTMKGIVPEQLVSMDCRILLCNTYHLGHRPGHERVKAAGGLHKMMNWNRSILTDSGGFQMVSLSKLMTVDENGVNFESPHTGEMMALPPEKSIEIQQALGADIMMQLDHVIHVLTTGDIVKEAMHRSIRWLDRCKVAHTRDDQAMFPILQGGLNLELRKECAKEMAKRAKVGIAIGGLSGGEEKDHFWRVVAACCAALPPHLPRYVMGVGFPVDLVICSFLGADMFDCVYPTRTARFGTAMVRRGGLMQLNQKRYKEDFLPIDKKCECNTCKNYTRAYIHSIVGKETVGCHLVSVHNIKHQLDLMRDVRQAIQSNSVEQFLKQFLYDYYGPIQSENPSKQDSEKMREVPQWVRDAVDHMGYKLDF</sequence>
<dbReference type="EC" id="2.4.2.64" evidence="1"/>
<dbReference type="EMBL" id="Z73899">
    <property type="protein sequence ID" value="CAA98076.1"/>
    <property type="molecule type" value="Genomic_DNA"/>
</dbReference>
<dbReference type="PIR" id="T28024">
    <property type="entry name" value="T28024"/>
</dbReference>
<dbReference type="RefSeq" id="NP_502268.1">
    <property type="nucleotide sequence ID" value="NM_069867.4"/>
</dbReference>
<dbReference type="SMR" id="Q23623"/>
<dbReference type="BioGRID" id="43225">
    <property type="interactions" value="1"/>
</dbReference>
<dbReference type="FunCoup" id="Q23623">
    <property type="interactions" value="1586"/>
</dbReference>
<dbReference type="IntAct" id="Q23623">
    <property type="interactions" value="1"/>
</dbReference>
<dbReference type="STRING" id="6239.ZK829.6.1"/>
<dbReference type="PaxDb" id="6239-ZK829.6"/>
<dbReference type="PeptideAtlas" id="Q23623"/>
<dbReference type="EnsemblMetazoa" id="ZK829.6.1">
    <property type="protein sequence ID" value="ZK829.6.1"/>
    <property type="gene ID" value="WBGene00006566"/>
</dbReference>
<dbReference type="GeneID" id="178131"/>
<dbReference type="KEGG" id="cel:CELE_ZK829.6"/>
<dbReference type="UCSC" id="ZK829.6">
    <property type="organism name" value="c. elegans"/>
</dbReference>
<dbReference type="AGR" id="WB:WBGene00006566"/>
<dbReference type="CTD" id="178131"/>
<dbReference type="WormBase" id="ZK829.6">
    <property type="protein sequence ID" value="CE52839"/>
    <property type="gene ID" value="WBGene00006566"/>
    <property type="gene designation" value="tgt-1"/>
</dbReference>
<dbReference type="eggNOG" id="KOG3908">
    <property type="taxonomic scope" value="Eukaryota"/>
</dbReference>
<dbReference type="GeneTree" id="ENSGT00530000063679"/>
<dbReference type="HOGENOM" id="CLU_022060_0_1_1"/>
<dbReference type="InParanoid" id="Q23623"/>
<dbReference type="OMA" id="IDLFDCV"/>
<dbReference type="OrthoDB" id="10249838at2759"/>
<dbReference type="PhylomeDB" id="Q23623"/>
<dbReference type="PRO" id="PR:Q23623"/>
<dbReference type="Proteomes" id="UP000001940">
    <property type="component" value="Chromosome IV"/>
</dbReference>
<dbReference type="Bgee" id="WBGene00006566">
    <property type="expression patterns" value="Expressed in germ line (C elegans) and 4 other cell types or tissues"/>
</dbReference>
<dbReference type="GO" id="GO:0005737">
    <property type="term" value="C:cytoplasm"/>
    <property type="evidence" value="ECO:0007669"/>
    <property type="project" value="UniProtKB-SubCell"/>
</dbReference>
<dbReference type="GO" id="GO:0046872">
    <property type="term" value="F:metal ion binding"/>
    <property type="evidence" value="ECO:0007669"/>
    <property type="project" value="UniProtKB-KW"/>
</dbReference>
<dbReference type="GO" id="GO:0008479">
    <property type="term" value="F:tRNA-guanosine(34) queuine transglycosylase activity"/>
    <property type="evidence" value="ECO:0000318"/>
    <property type="project" value="GO_Central"/>
</dbReference>
<dbReference type="GO" id="GO:0101030">
    <property type="term" value="P:tRNA-guanine transglycosylation"/>
    <property type="evidence" value="ECO:0000318"/>
    <property type="project" value="GO_Central"/>
</dbReference>
<dbReference type="Gene3D" id="3.20.20.105">
    <property type="entry name" value="Queuine tRNA-ribosyltransferase-like"/>
    <property type="match status" value="1"/>
</dbReference>
<dbReference type="HAMAP" id="MF_00168">
    <property type="entry name" value="Q_tRNA_Tgt"/>
    <property type="match status" value="1"/>
</dbReference>
<dbReference type="InterPro" id="IPR004803">
    <property type="entry name" value="TGT"/>
</dbReference>
<dbReference type="InterPro" id="IPR036511">
    <property type="entry name" value="TGT-like_sf"/>
</dbReference>
<dbReference type="InterPro" id="IPR002616">
    <property type="entry name" value="tRNA_ribo_trans-like"/>
</dbReference>
<dbReference type="NCBIfam" id="TIGR00430">
    <property type="entry name" value="Q_tRNA_tgt"/>
    <property type="match status" value="1"/>
</dbReference>
<dbReference type="NCBIfam" id="TIGR00449">
    <property type="entry name" value="tgt_general"/>
    <property type="match status" value="1"/>
</dbReference>
<dbReference type="PANTHER" id="PTHR43530">
    <property type="entry name" value="QUEUINE TRNA-RIBOSYLTRANSFERASE CATALYTIC SUBUNIT 1"/>
    <property type="match status" value="1"/>
</dbReference>
<dbReference type="PANTHER" id="PTHR43530:SF1">
    <property type="entry name" value="QUEUINE TRNA-RIBOSYLTRANSFERASE CATALYTIC SUBUNIT 1"/>
    <property type="match status" value="1"/>
</dbReference>
<dbReference type="Pfam" id="PF01702">
    <property type="entry name" value="TGT"/>
    <property type="match status" value="1"/>
</dbReference>
<dbReference type="SUPFAM" id="SSF51713">
    <property type="entry name" value="tRNA-guanine transglycosylase"/>
    <property type="match status" value="1"/>
</dbReference>
<gene>
    <name evidence="1" type="primary">tgt-1</name>
    <name type="ORF">ZK829.6</name>
</gene>
<organism>
    <name type="scientific">Caenorhabditis elegans</name>
    <dbReference type="NCBI Taxonomy" id="6239"/>
    <lineage>
        <taxon>Eukaryota</taxon>
        <taxon>Metazoa</taxon>
        <taxon>Ecdysozoa</taxon>
        <taxon>Nematoda</taxon>
        <taxon>Chromadorea</taxon>
        <taxon>Rhabditida</taxon>
        <taxon>Rhabditina</taxon>
        <taxon>Rhabditomorpha</taxon>
        <taxon>Rhabditoidea</taxon>
        <taxon>Rhabditidae</taxon>
        <taxon>Peloderinae</taxon>
        <taxon>Caenorhabditis</taxon>
    </lineage>
</organism>
<keyword id="KW-0963">Cytoplasm</keyword>
<keyword id="KW-0328">Glycosyltransferase</keyword>
<keyword id="KW-0479">Metal-binding</keyword>
<keyword id="KW-1185">Reference proteome</keyword>
<keyword id="KW-0808">Transferase</keyword>
<keyword id="KW-0819">tRNA processing</keyword>
<keyword id="KW-0862">Zinc</keyword>
<comment type="function">
    <text evidence="1">Catalytic subunit of the queuine tRNA-ribosyltransferase (TGT) that catalyzes the base-exchange of a guanine (G) residue with queuine (Q) at position 34 (anticodon wobble position) in tRNAs with GU(N) anticodons (tRNA-Asp, -Asn, -His and -Tyr), resulting in the hypermodified nucleoside queuosine (7-(((4,5-cis-dihydroxy-2-cyclopenten-1-yl)amino)methyl)-7-deazaguanosine). Catalysis occurs through a double-displacement mechanism. The nucleophile active site attacks the C1' of nucleotide 34 to detach the guanine base from the RNA, forming a covalent enzyme-RNA intermediate. The proton acceptor active site deprotonates the incoming queuine, allowing a nucleophilic attack on the C1' of the ribose to form the product.</text>
</comment>
<comment type="catalytic activity">
    <reaction evidence="1">
        <text>guanosine(34) in tRNA + queuine = queuosine(34) in tRNA + guanine</text>
        <dbReference type="Rhea" id="RHEA:16633"/>
        <dbReference type="Rhea" id="RHEA-COMP:10341"/>
        <dbReference type="Rhea" id="RHEA-COMP:18571"/>
        <dbReference type="ChEBI" id="CHEBI:16235"/>
        <dbReference type="ChEBI" id="CHEBI:17433"/>
        <dbReference type="ChEBI" id="CHEBI:74269"/>
        <dbReference type="ChEBI" id="CHEBI:194431"/>
        <dbReference type="EC" id="2.4.2.64"/>
    </reaction>
</comment>
<comment type="cofactor">
    <cofactor evidence="1">
        <name>Zn(2+)</name>
        <dbReference type="ChEBI" id="CHEBI:29105"/>
    </cofactor>
</comment>
<comment type="subunit">
    <text evidence="1">Heterodimer of a catalytic subunit and an accessory subunit.</text>
</comment>
<comment type="subcellular location">
    <subcellularLocation>
        <location evidence="1">Cytoplasm</location>
    </subcellularLocation>
</comment>
<comment type="similarity">
    <text evidence="1">Belongs to the queuine tRNA-ribosyltransferase family.</text>
</comment>
<feature type="chain" id="PRO_0000135567" description="Queuine tRNA-ribosyltransferase catalytic subunit">
    <location>
        <begin position="1"/>
        <end position="400"/>
    </location>
</feature>
<feature type="region of interest" description="RNA binding" evidence="1">
    <location>
        <begin position="243"/>
        <end position="249"/>
    </location>
</feature>
<feature type="region of interest" description="RNA binding; important for wobble base 34 recognition" evidence="1">
    <location>
        <begin position="267"/>
        <end position="271"/>
    </location>
</feature>
<feature type="active site" description="Proton acceptor" evidence="1">
    <location>
        <position position="89"/>
    </location>
</feature>
<feature type="active site" description="Nucleophile" evidence="1">
    <location>
        <position position="262"/>
    </location>
</feature>
<feature type="binding site" evidence="1">
    <location>
        <begin position="89"/>
        <end position="93"/>
    </location>
    <ligand>
        <name>substrate</name>
    </ligand>
</feature>
<feature type="binding site" evidence="1">
    <location>
        <position position="143"/>
    </location>
    <ligand>
        <name>substrate</name>
    </ligand>
</feature>
<feature type="binding site" evidence="1">
    <location>
        <position position="185"/>
    </location>
    <ligand>
        <name>substrate</name>
    </ligand>
</feature>
<feature type="binding site" evidence="1">
    <location>
        <position position="212"/>
    </location>
    <ligand>
        <name>substrate</name>
    </ligand>
</feature>
<feature type="binding site" evidence="1">
    <location>
        <position position="301"/>
    </location>
    <ligand>
        <name>Zn(2+)</name>
        <dbReference type="ChEBI" id="CHEBI:29105"/>
    </ligand>
</feature>
<feature type="binding site" evidence="1">
    <location>
        <position position="303"/>
    </location>
    <ligand>
        <name>Zn(2+)</name>
        <dbReference type="ChEBI" id="CHEBI:29105"/>
    </ligand>
</feature>
<feature type="binding site" evidence="1">
    <location>
        <position position="306"/>
    </location>
    <ligand>
        <name>Zn(2+)</name>
        <dbReference type="ChEBI" id="CHEBI:29105"/>
    </ligand>
</feature>
<feature type="binding site" evidence="1">
    <location>
        <position position="331"/>
    </location>
    <ligand>
        <name>Zn(2+)</name>
        <dbReference type="ChEBI" id="CHEBI:29105"/>
    </ligand>
</feature>
<name>TGT_CAEEL</name>
<proteinExistence type="inferred from homology"/>
<reference key="1">
    <citation type="journal article" date="1998" name="Science">
        <title>Genome sequence of the nematode C. elegans: a platform for investigating biology.</title>
        <authorList>
            <consortium name="The C. elegans sequencing consortium"/>
        </authorList>
    </citation>
    <scope>NUCLEOTIDE SEQUENCE [LARGE SCALE GENOMIC DNA]</scope>
    <source>
        <strain>Bristol N2</strain>
    </source>
</reference>
<protein>
    <recommendedName>
        <fullName evidence="1">Queuine tRNA-ribosyltransferase catalytic subunit</fullName>
        <ecNumber evidence="1">2.4.2.64</ecNumber>
    </recommendedName>
    <alternativeName>
        <fullName evidence="1">Guanine insertion enzyme</fullName>
    </alternativeName>
    <alternativeName>
        <fullName evidence="1">tRNA-guanine transglycosylase</fullName>
    </alternativeName>
</protein>
<evidence type="ECO:0000255" key="1">
    <source>
        <dbReference type="HAMAP-Rule" id="MF_03218"/>
    </source>
</evidence>